<evidence type="ECO:0000250" key="1"/>
<evidence type="ECO:0000250" key="2">
    <source>
        <dbReference type="UniProtKB" id="P01106"/>
    </source>
</evidence>
<evidence type="ECO:0000250" key="3">
    <source>
        <dbReference type="UniProtKB" id="P01108"/>
    </source>
</evidence>
<evidence type="ECO:0000255" key="4">
    <source>
        <dbReference type="PROSITE-ProRule" id="PRU00981"/>
    </source>
</evidence>
<evidence type="ECO:0000256" key="5">
    <source>
        <dbReference type="SAM" id="MobiDB-lite"/>
    </source>
</evidence>
<sequence length="439" mass="48820">MPLNVSFTNRNYDLDYDSVQPYFYCDEEENFYQQQQQSELQPPAPSEDIWKKFELLPTPPLSPSRRSGLCSPSYVAVTPFSPRGDNDGGGGSFSTADQLEMVTELLGGDMVNQSFICDPDDETFIKNIIIQDCMWSGFSAAAKLVSEKLASYQAARKDSSSPNPARGHSVCSTSSLYLQDLSAAASECIDPSVVFPYPLNDSSSPKSCASPDSSAFSPSSDSLLSSTESSPQASPEPLVLHEETPPTTSSDSEEEQEDEEEIDVVSVEKRQAPSKRSESGSPSAGGHSKPPHSPLVLKRCHVSTHQHNYAAPPSTRKDYPAAKRVKLDSVRVLRQISNNRKCTSPRSSDTEENDKRRTHNVLERQRRNELKRSFFALRDQIPELENNEKAPKVVILKKATAYILSVQGEEQKLTSEKDLLRKRREQLKHKLEQLRNSCA</sequence>
<accession>P49033</accession>
<protein>
    <recommendedName>
        <fullName>Myc proto-oncogene protein</fullName>
    </recommendedName>
    <alternativeName>
        <fullName>Proto-oncogene c-Myc</fullName>
    </alternativeName>
    <alternativeName>
        <fullName>Transcription factor p64</fullName>
    </alternativeName>
</protein>
<dbReference type="EMBL" id="M88115">
    <property type="protein sequence ID" value="AAA35465.1"/>
    <property type="molecule type" value="Genomic_DNA"/>
</dbReference>
<dbReference type="PIR" id="JC1178">
    <property type="entry name" value="JC1178"/>
</dbReference>
<dbReference type="SMR" id="P49033"/>
<dbReference type="GlyCosmos" id="P49033">
    <property type="glycosylation" value="1 site, No reported glycans"/>
</dbReference>
<dbReference type="GO" id="GO:0005737">
    <property type="term" value="C:cytoplasm"/>
    <property type="evidence" value="ECO:0007669"/>
    <property type="project" value="UniProtKB-SubCell"/>
</dbReference>
<dbReference type="GO" id="GO:0005730">
    <property type="term" value="C:nucleolus"/>
    <property type="evidence" value="ECO:0000250"/>
    <property type="project" value="UniProtKB"/>
</dbReference>
<dbReference type="GO" id="GO:0005654">
    <property type="term" value="C:nucleoplasm"/>
    <property type="evidence" value="ECO:0000250"/>
    <property type="project" value="UniProtKB"/>
</dbReference>
<dbReference type="GO" id="GO:0005634">
    <property type="term" value="C:nucleus"/>
    <property type="evidence" value="ECO:0000250"/>
    <property type="project" value="UniProtKB"/>
</dbReference>
<dbReference type="GO" id="GO:0003677">
    <property type="term" value="F:DNA binding"/>
    <property type="evidence" value="ECO:0000250"/>
    <property type="project" value="UniProtKB"/>
</dbReference>
<dbReference type="GO" id="GO:0000981">
    <property type="term" value="F:DNA-binding transcription factor activity, RNA polymerase II-specific"/>
    <property type="evidence" value="ECO:0000250"/>
    <property type="project" value="UniProtKB"/>
</dbReference>
<dbReference type="GO" id="GO:0070888">
    <property type="term" value="F:E-box binding"/>
    <property type="evidence" value="ECO:0000250"/>
    <property type="project" value="UniProtKB"/>
</dbReference>
<dbReference type="GO" id="GO:0046983">
    <property type="term" value="F:protein dimerization activity"/>
    <property type="evidence" value="ECO:0007669"/>
    <property type="project" value="InterPro"/>
</dbReference>
<dbReference type="GO" id="GO:0044877">
    <property type="term" value="F:protein-containing complex binding"/>
    <property type="evidence" value="ECO:0000250"/>
    <property type="project" value="UniProtKB"/>
</dbReference>
<dbReference type="GO" id="GO:0006338">
    <property type="term" value="P:chromatin remodeling"/>
    <property type="evidence" value="ECO:0000250"/>
    <property type="project" value="UniProtKB"/>
</dbReference>
<dbReference type="GO" id="GO:0051276">
    <property type="term" value="P:chromosome organization"/>
    <property type="evidence" value="ECO:0000250"/>
    <property type="project" value="UniProtKB"/>
</dbReference>
<dbReference type="GO" id="GO:0006974">
    <property type="term" value="P:DNA damage response"/>
    <property type="evidence" value="ECO:0000250"/>
    <property type="project" value="UniProtKB"/>
</dbReference>
<dbReference type="GO" id="GO:0000082">
    <property type="term" value="P:G1/S transition of mitotic cell cycle"/>
    <property type="evidence" value="ECO:0000250"/>
    <property type="project" value="UniProtKB"/>
</dbReference>
<dbReference type="GO" id="GO:0006879">
    <property type="term" value="P:intracellular iron ion homeostasis"/>
    <property type="evidence" value="ECO:0000250"/>
    <property type="project" value="UniProtKB"/>
</dbReference>
<dbReference type="GO" id="GO:0000165">
    <property type="term" value="P:MAPK cascade"/>
    <property type="evidence" value="ECO:0000250"/>
    <property type="project" value="UniProtKB"/>
</dbReference>
<dbReference type="GO" id="GO:0043066">
    <property type="term" value="P:negative regulation of apoptotic process"/>
    <property type="evidence" value="ECO:0000250"/>
    <property type="project" value="UniProtKB"/>
</dbReference>
<dbReference type="GO" id="GO:0051782">
    <property type="term" value="P:negative regulation of cell division"/>
    <property type="evidence" value="ECO:0000250"/>
    <property type="project" value="UniProtKB"/>
</dbReference>
<dbReference type="GO" id="GO:0045656">
    <property type="term" value="P:negative regulation of monocyte differentiation"/>
    <property type="evidence" value="ECO:0000250"/>
    <property type="project" value="UniProtKB"/>
</dbReference>
<dbReference type="GO" id="GO:0032873">
    <property type="term" value="P:negative regulation of stress-activated MAPK cascade"/>
    <property type="evidence" value="ECO:0000250"/>
    <property type="project" value="UniProtKB"/>
</dbReference>
<dbReference type="GO" id="GO:0045893">
    <property type="term" value="P:positive regulation of DNA-templated transcription"/>
    <property type="evidence" value="ECO:0000250"/>
    <property type="project" value="UniProtKB"/>
</dbReference>
<dbReference type="GO" id="GO:0050679">
    <property type="term" value="P:positive regulation of epithelial cell proliferation"/>
    <property type="evidence" value="ECO:0000250"/>
    <property type="project" value="UniProtKB"/>
</dbReference>
<dbReference type="GO" id="GO:0048146">
    <property type="term" value="P:positive regulation of fibroblast proliferation"/>
    <property type="evidence" value="ECO:0000250"/>
    <property type="project" value="UniProtKB"/>
</dbReference>
<dbReference type="GO" id="GO:0045944">
    <property type="term" value="P:positive regulation of transcription by RNA polymerase II"/>
    <property type="evidence" value="ECO:0000250"/>
    <property type="project" value="UniProtKB"/>
</dbReference>
<dbReference type="GO" id="GO:0006355">
    <property type="term" value="P:regulation of DNA-templated transcription"/>
    <property type="evidence" value="ECO:0000250"/>
    <property type="project" value="UniProtKB"/>
</dbReference>
<dbReference type="GO" id="GO:1904672">
    <property type="term" value="P:regulation of somatic stem cell population maintenance"/>
    <property type="evidence" value="ECO:0000250"/>
    <property type="project" value="UniProtKB"/>
</dbReference>
<dbReference type="GO" id="GO:0032204">
    <property type="term" value="P:regulation of telomere maintenance"/>
    <property type="evidence" value="ECO:0000250"/>
    <property type="project" value="UniProtKB"/>
</dbReference>
<dbReference type="GO" id="GO:0009410">
    <property type="term" value="P:response to xenobiotic stimulus"/>
    <property type="evidence" value="ECO:0000250"/>
    <property type="project" value="UniProtKB"/>
</dbReference>
<dbReference type="GO" id="GO:0016072">
    <property type="term" value="P:rRNA metabolic process"/>
    <property type="evidence" value="ECO:0000250"/>
    <property type="project" value="UniProtKB"/>
</dbReference>
<dbReference type="CDD" id="cd11458">
    <property type="entry name" value="bHLHzip_c-Myc"/>
    <property type="match status" value="1"/>
</dbReference>
<dbReference type="FunFam" id="4.10.280.10:FF:000019">
    <property type="entry name" value="Myc proto-oncogene protein"/>
    <property type="match status" value="1"/>
</dbReference>
<dbReference type="Gene3D" id="4.10.280.10">
    <property type="entry name" value="Helix-loop-helix DNA-binding domain"/>
    <property type="match status" value="1"/>
</dbReference>
<dbReference type="InterPro" id="IPR011598">
    <property type="entry name" value="bHLH_dom"/>
</dbReference>
<dbReference type="InterPro" id="IPR036638">
    <property type="entry name" value="HLH_DNA-bd_sf"/>
</dbReference>
<dbReference type="InterPro" id="IPR003327">
    <property type="entry name" value="Myc-LZ"/>
</dbReference>
<dbReference type="InterPro" id="IPR050433">
    <property type="entry name" value="Myc_transcription_factors"/>
</dbReference>
<dbReference type="InterPro" id="IPR002418">
    <property type="entry name" value="Tscrpt_reg_Myc"/>
</dbReference>
<dbReference type="InterPro" id="IPR012682">
    <property type="entry name" value="Tscrpt_reg_Myc_N"/>
</dbReference>
<dbReference type="PANTHER" id="PTHR45851">
    <property type="entry name" value="MYC PROTO-ONCOGENE"/>
    <property type="match status" value="1"/>
</dbReference>
<dbReference type="Pfam" id="PF00010">
    <property type="entry name" value="HLH"/>
    <property type="match status" value="1"/>
</dbReference>
<dbReference type="Pfam" id="PF02344">
    <property type="entry name" value="Myc-LZ"/>
    <property type="match status" value="1"/>
</dbReference>
<dbReference type="Pfam" id="PF01056">
    <property type="entry name" value="Myc_N"/>
    <property type="match status" value="1"/>
</dbReference>
<dbReference type="PIRSF" id="PIRSF001705">
    <property type="entry name" value="Myc_protein"/>
    <property type="match status" value="1"/>
</dbReference>
<dbReference type="PRINTS" id="PR00044">
    <property type="entry name" value="LEUZIPPRMYC"/>
</dbReference>
<dbReference type="SMART" id="SM00353">
    <property type="entry name" value="HLH"/>
    <property type="match status" value="1"/>
</dbReference>
<dbReference type="SUPFAM" id="SSF47459">
    <property type="entry name" value="HLH, helix-loop-helix DNA-binding domain"/>
    <property type="match status" value="1"/>
</dbReference>
<dbReference type="PROSITE" id="PS50888">
    <property type="entry name" value="BHLH"/>
    <property type="match status" value="1"/>
</dbReference>
<proteinExistence type="inferred from homology"/>
<feature type="chain" id="PRO_0000127294" description="Myc proto-oncogene protein">
    <location>
        <begin position="1"/>
        <end position="439"/>
    </location>
</feature>
<feature type="domain" description="bHLH" evidence="4">
    <location>
        <begin position="354"/>
        <end position="406"/>
    </location>
</feature>
<feature type="region of interest" description="Disordered" evidence="5">
    <location>
        <begin position="201"/>
        <end position="295"/>
    </location>
</feature>
<feature type="region of interest" description="Disordered" evidence="5">
    <location>
        <begin position="334"/>
        <end position="364"/>
    </location>
</feature>
<feature type="region of interest" description="Leucine-zipper">
    <location>
        <begin position="413"/>
        <end position="434"/>
    </location>
</feature>
<feature type="short sequence motif" description="9aaTAD" evidence="2">
    <location>
        <begin position="100"/>
        <end position="108"/>
    </location>
</feature>
<feature type="short sequence motif" description="UBR5-degron" evidence="2">
    <location>
        <begin position="355"/>
        <end position="364"/>
    </location>
</feature>
<feature type="compositionally biased region" description="Low complexity" evidence="5">
    <location>
        <begin position="201"/>
        <end position="237"/>
    </location>
</feature>
<feature type="compositionally biased region" description="Acidic residues" evidence="5">
    <location>
        <begin position="251"/>
        <end position="263"/>
    </location>
</feature>
<feature type="compositionally biased region" description="Basic and acidic residues" evidence="5">
    <location>
        <begin position="266"/>
        <end position="278"/>
    </location>
</feature>
<feature type="compositionally biased region" description="Polar residues" evidence="5">
    <location>
        <begin position="335"/>
        <end position="347"/>
    </location>
</feature>
<feature type="modified residue" description="Phosphoserine" evidence="2">
    <location>
        <position position="6"/>
    </location>
</feature>
<feature type="modified residue" description="Phosphothreonine" evidence="2">
    <location>
        <position position="8"/>
    </location>
</feature>
<feature type="modified residue" description="Phosphothreonine; by GSK3; alternate" evidence="2">
    <location>
        <position position="58"/>
    </location>
</feature>
<feature type="modified residue" description="Phosphoserine; by DYRK2, GSK3 and CDK2" evidence="2">
    <location>
        <position position="62"/>
    </location>
</feature>
<feature type="modified residue" description="Phosphoserine" evidence="2">
    <location>
        <position position="71"/>
    </location>
</feature>
<feature type="modified residue" description="Phosphoserine" evidence="2">
    <location>
        <position position="81"/>
    </location>
</feature>
<feature type="modified residue" description="N6-acetyllysine; by PCAF; alternate" evidence="2">
    <location>
        <position position="143"/>
    </location>
</feature>
<feature type="modified residue" description="N6-acetyllysine; alternate" evidence="2">
    <location>
        <position position="148"/>
    </location>
</feature>
<feature type="modified residue" description="Phosphoserine" evidence="2">
    <location>
        <position position="151"/>
    </location>
</feature>
<feature type="modified residue" description="N6-acetyllysine; by PCAF" evidence="2">
    <location>
        <position position="157"/>
    </location>
</feature>
<feature type="modified residue" description="Phosphoserine" evidence="2">
    <location>
        <position position="159"/>
    </location>
</feature>
<feature type="modified residue" description="Phosphoserine" evidence="2">
    <location>
        <position position="161"/>
    </location>
</feature>
<feature type="modified residue" description="N6-acetyllysine; by PCAF" evidence="2">
    <location>
        <position position="275"/>
    </location>
</feature>
<feature type="modified residue" description="Phosphoserine" evidence="2">
    <location>
        <position position="293"/>
    </location>
</feature>
<feature type="modified residue" description="Phosphoserine" evidence="2">
    <location>
        <position position="314"/>
    </location>
</feature>
<feature type="modified residue" description="Phosphothreonine" evidence="2">
    <location>
        <position position="315"/>
    </location>
</feature>
<feature type="modified residue" description="N6-acetyllysine; by PCAF" evidence="2">
    <location>
        <position position="317"/>
    </location>
</feature>
<feature type="modified residue" description="N6-acetyllysine; by PCAF" evidence="2">
    <location>
        <position position="323"/>
    </location>
</feature>
<feature type="modified residue" description="Phosphoserine; by PIM2; in vitro" evidence="3">
    <location>
        <position position="329"/>
    </location>
</feature>
<feature type="modified residue" description="Phosphoserine" evidence="2">
    <location>
        <position position="344"/>
    </location>
</feature>
<feature type="modified residue" description="Phosphoserine" evidence="2">
    <location>
        <position position="347"/>
    </location>
</feature>
<feature type="modified residue" description="Phosphoserine" evidence="2">
    <location>
        <position position="348"/>
    </location>
</feature>
<feature type="modified residue" description="N6-acetyllysine; by PCAF" evidence="2">
    <location>
        <position position="371"/>
    </location>
</feature>
<feature type="glycosylation site" description="O-linked (GlcNAc) threonine; alternate" evidence="1">
    <location>
        <position position="58"/>
    </location>
</feature>
<feature type="cross-link" description="Glycyl lysine isopeptide (Lys-Gly) (interchain with G-Cter in SUMO2)" evidence="2">
    <location>
        <position position="52"/>
    </location>
</feature>
<feature type="cross-link" description="Glycyl lysine isopeptide (Lys-Gly) (interchain with G-Cter in SUMO2); alternate" evidence="2">
    <location>
        <position position="143"/>
    </location>
</feature>
<feature type="cross-link" description="Glycyl lysine isopeptide (Lys-Gly) (interchain with G-Cter in SUMO2); alternate" evidence="2">
    <location>
        <position position="148"/>
    </location>
</feature>
<feature type="cross-link" description="Glycyl lysine isopeptide (Lys-Gly) (interchain with G-Cter in SUMO2)" evidence="2">
    <location>
        <position position="298"/>
    </location>
</feature>
<comment type="function">
    <text evidence="2 3">Transcription factor that binds DNA in a non-specific manner, yet also specifically recognizes the core sequence 5'-CAC[GA]TG-3'. Activates the transcription of growth-related genes. Binds to the VEGFA promoter, promoting VEGFA production and subsequent sprouting angiogenesis. Regulator of somatic reprogramming, controls self-renewal of embryonic stem cells. Functions with TAF6L to activate target gene expression through RNA polymerase II pause release (By similarity). Positively regulates transcription of HNRNPA1, HNRNPA2 and PTBP1 which in turn regulate splicing of pyruvate kinase PKM by binding repressively to sequences flanking PKM exon 9, inhibiting exon 9 inclusion and resulting in exon 10 inclusion and production of the PKM M2 isoform (By similarity).</text>
</comment>
<comment type="subunit">
    <text evidence="2 3">Efficient DNA binding requires dimerization with another bHLH protein. Binds DNA as a heterodimer with MAX (By similarity). Interacts with TAF1C and SPAG9. Interacts with PARP10. Interacts with KDM5A and KDM5B. Interacts (when phosphorylated at Thr-58 and Ser-62) with FBXW7. Interacts with PIM2. Interacts with RIOX1. The heterodimer MYC:MAX interacts with ABI1; the interaction may enhance MYC:MAX transcriptional activity. Interacts with TRIM6 (By similarity). Interacts with NPM1; the binary complex is recruited to the promoter of MYC target genes and enhances their transcription (By similarity). Interacts with CIP2A; leading to the stabilization of MYC (By similarity). Interacts with NUP205 (By similarity). Interacts with HEATR1; the interaction is required for localization of MYC to the nucleolus (By similarity).</text>
</comment>
<comment type="subcellular location">
    <subcellularLocation>
        <location evidence="2">Nucleus</location>
        <location evidence="2">Nucleoplasm</location>
    </subcellularLocation>
    <subcellularLocation>
        <location evidence="2">Nucleus</location>
        <location evidence="2">Nucleolus</location>
    </subcellularLocation>
    <subcellularLocation>
        <location evidence="2">Nucleus</location>
    </subcellularLocation>
    <subcellularLocation>
        <location evidence="2">Cytoplasm</location>
    </subcellularLocation>
    <subcellularLocation>
        <location evidence="2">Chromosome</location>
    </subcellularLocation>
    <text evidence="2">Association with chromatin is reduced by hyperphosphorylation. Localization to the nucleolus is dependent on HEATR1.</text>
</comment>
<comment type="domain">
    <text evidence="2">The 9aaTAD motif is a transactivation domain present in a large number of yeast and animal transcription factors.</text>
</comment>
<comment type="PTM">
    <text evidence="2 3">Phosphorylated by PRKDC (By similarity). Phosphorylation at Ser-329 by PIM2 leads to the stabilization of MYC (By similarity). Phosphorylation at Ser-62 by CDK2 prevents Ras-induced senescence. Phosphorylated at Ser-62 by DYRK2; this primes the protein for subsequent phosphorylation by GSK3B at Thr-58. Phosphorylation at Thr-58 and Ser-62 by GSK3 is required for ubiquitination and degradation by the proteasome. Dephosphorylation at multiple sites by the PNUTS-PP1 complex promotes MYC stability by preventing ubiquitination by the SCF(FBXW7) complex. Dephosphorylation at Ser-62 by protein phosphatase 2A (PPP2CA) promotes its degradation; interaction with PPP2CA is enhanced by AMBRA1 (By similarity).</text>
</comment>
<comment type="PTM">
    <text evidence="2 3">Ubiquitinated by the SCF(FBXW7) complex when phosphorylated at Thr-58 and Ser-62, leading to its degradation by the proteasome. Ubiquitination is counteracted by USP28 in the nucleoplasm and USP36 in the nucleolus, both interacting with of FBXW7, leading to its deubiquitination and preventing degradation. Also polyubiquitinated by the DCX(TRPC4AP) complex. Ubiquitinated by UBR5 when not forming a heterodimer with another bHLH protein, leading to its degradation: UBR5 recognizes and binds a degron that is only available upon heterodimer dissociation (By similarity). Ubiquitinated by TRIM6 in a phosphorylation-independent manner.</text>
</comment>
<organism>
    <name type="scientific">Hylobates lar</name>
    <name type="common">Lar gibbon</name>
    <name type="synonym">White-handed gibbon</name>
    <dbReference type="NCBI Taxonomy" id="9580"/>
    <lineage>
        <taxon>Eukaryota</taxon>
        <taxon>Metazoa</taxon>
        <taxon>Chordata</taxon>
        <taxon>Craniata</taxon>
        <taxon>Vertebrata</taxon>
        <taxon>Euteleostomi</taxon>
        <taxon>Mammalia</taxon>
        <taxon>Eutheria</taxon>
        <taxon>Euarchontoglires</taxon>
        <taxon>Primates</taxon>
        <taxon>Haplorrhini</taxon>
        <taxon>Catarrhini</taxon>
        <taxon>Hylobatidae</taxon>
        <taxon>Hylobates</taxon>
    </lineage>
</organism>
<reference key="1">
    <citation type="journal article" date="1992" name="Gene">
        <title>Gibbon and marmoset c-myc nucleotide sequences.</title>
        <authorList>
            <person name="Eladari M.E."/>
            <person name="Mohammad-Ali K."/>
            <person name="Argaut C."/>
            <person name="Galibert F."/>
        </authorList>
    </citation>
    <scope>NUCLEOTIDE SEQUENCE [GENOMIC DNA]</scope>
</reference>
<name>MYC_HYLLA</name>
<keyword id="KW-0007">Acetylation</keyword>
<keyword id="KW-0010">Activator</keyword>
<keyword id="KW-0158">Chromosome</keyword>
<keyword id="KW-0963">Cytoplasm</keyword>
<keyword id="KW-0238">DNA-binding</keyword>
<keyword id="KW-0325">Glycoprotein</keyword>
<keyword id="KW-1017">Isopeptide bond</keyword>
<keyword id="KW-0539">Nucleus</keyword>
<keyword id="KW-0597">Phosphoprotein</keyword>
<keyword id="KW-0656">Proto-oncogene</keyword>
<keyword id="KW-0804">Transcription</keyword>
<keyword id="KW-0805">Transcription regulation</keyword>
<keyword id="KW-0832">Ubl conjugation</keyword>
<gene>
    <name type="primary">MYC</name>
</gene>